<gene>
    <name evidence="1" type="primary">murD</name>
    <name type="ordered locus">LSL_1051</name>
</gene>
<keyword id="KW-0067">ATP-binding</keyword>
<keyword id="KW-0131">Cell cycle</keyword>
<keyword id="KW-0132">Cell division</keyword>
<keyword id="KW-0133">Cell shape</keyword>
<keyword id="KW-0961">Cell wall biogenesis/degradation</keyword>
<keyword id="KW-0963">Cytoplasm</keyword>
<keyword id="KW-0436">Ligase</keyword>
<keyword id="KW-0547">Nucleotide-binding</keyword>
<keyword id="KW-0573">Peptidoglycan synthesis</keyword>
<keyword id="KW-1185">Reference proteome</keyword>
<protein>
    <recommendedName>
        <fullName evidence="1">UDP-N-acetylmuramoylalanine--D-glutamate ligase</fullName>
        <ecNumber evidence="1">6.3.2.9</ecNumber>
    </recommendedName>
    <alternativeName>
        <fullName evidence="1">D-glutamic acid-adding enzyme</fullName>
    </alternativeName>
    <alternativeName>
        <fullName evidence="1">UDP-N-acetylmuramoyl-L-alanyl-D-glutamate synthetase</fullName>
    </alternativeName>
</protein>
<name>MURD_LIGS1</name>
<proteinExistence type="inferred from homology"/>
<comment type="function">
    <text evidence="1">Cell wall formation. Catalyzes the addition of glutamate to the nucleotide precursor UDP-N-acetylmuramoyl-L-alanine (UMA).</text>
</comment>
<comment type="catalytic activity">
    <reaction evidence="1">
        <text>UDP-N-acetyl-alpha-D-muramoyl-L-alanine + D-glutamate + ATP = UDP-N-acetyl-alpha-D-muramoyl-L-alanyl-D-glutamate + ADP + phosphate + H(+)</text>
        <dbReference type="Rhea" id="RHEA:16429"/>
        <dbReference type="ChEBI" id="CHEBI:15378"/>
        <dbReference type="ChEBI" id="CHEBI:29986"/>
        <dbReference type="ChEBI" id="CHEBI:30616"/>
        <dbReference type="ChEBI" id="CHEBI:43474"/>
        <dbReference type="ChEBI" id="CHEBI:83898"/>
        <dbReference type="ChEBI" id="CHEBI:83900"/>
        <dbReference type="ChEBI" id="CHEBI:456216"/>
        <dbReference type="EC" id="6.3.2.9"/>
    </reaction>
</comment>
<comment type="pathway">
    <text evidence="1">Cell wall biogenesis; peptidoglycan biosynthesis.</text>
</comment>
<comment type="subcellular location">
    <subcellularLocation>
        <location evidence="1">Cytoplasm</location>
    </subcellularLocation>
</comment>
<comment type="similarity">
    <text evidence="1">Belongs to the MurCDEF family.</text>
</comment>
<sequence length="458" mass="50275">MKMIEKYRGKKVLVLGLGKSGVNAAKLLKKLGAEVTVNDKNTPSDLTQVNELKNEGIEVITGSHPLELLENIDLMVKNPGIPYTNVLVSGAKDKGIKIITEPELAFEISDARFVGVTGTNGKTTTTTMISLMLNQGQTEGKAYVAGNIGVPASQVAQEATSKDTIVTELSSFQLLGITEYHPKVAVLTNIYEAHIDYHGTRENYVNAKMRIVMNQTEDDYFVVNWDNEEWQELSQRSKAKIVPFSRLGKSKDGAYVAGGYLFYKEDKIMPVDNIKVPGTHNVENALAAIAVAKIFGKSNEDIKEVLTTFSGVRHRTQYVTTLNGRKFYNDSKATNMEATEKALAGFNNPVVLLAGGLDRGFTFEKLEPSLKNKVHAMIVFGETADLMAKAGKEAGVEKIIKTKDAVSAVPEAYKVSNEGDVILLSPACASWDQWPTFEVRGDKFIEAVEKLTEELEEK</sequence>
<evidence type="ECO:0000255" key="1">
    <source>
        <dbReference type="HAMAP-Rule" id="MF_00639"/>
    </source>
</evidence>
<organism>
    <name type="scientific">Ligilactobacillus salivarius (strain UCC118)</name>
    <name type="common">Lactobacillus salivarius</name>
    <dbReference type="NCBI Taxonomy" id="362948"/>
    <lineage>
        <taxon>Bacteria</taxon>
        <taxon>Bacillati</taxon>
        <taxon>Bacillota</taxon>
        <taxon>Bacilli</taxon>
        <taxon>Lactobacillales</taxon>
        <taxon>Lactobacillaceae</taxon>
        <taxon>Ligilactobacillus</taxon>
    </lineage>
</organism>
<dbReference type="EC" id="6.3.2.9" evidence="1"/>
<dbReference type="EMBL" id="CP000233">
    <property type="protein sequence ID" value="ABD99859.1"/>
    <property type="molecule type" value="Genomic_DNA"/>
</dbReference>
<dbReference type="RefSeq" id="WP_011476140.1">
    <property type="nucleotide sequence ID" value="NC_007929.1"/>
</dbReference>
<dbReference type="RefSeq" id="YP_535942.1">
    <property type="nucleotide sequence ID" value="NC_007929.1"/>
</dbReference>
<dbReference type="SMR" id="Q1WT99"/>
<dbReference type="STRING" id="362948.LSL_1051"/>
<dbReference type="KEGG" id="lsl:LSL_1051"/>
<dbReference type="PATRIC" id="fig|362948.14.peg.1124"/>
<dbReference type="HOGENOM" id="CLU_032540_0_1_9"/>
<dbReference type="OrthoDB" id="9809796at2"/>
<dbReference type="UniPathway" id="UPA00219"/>
<dbReference type="Proteomes" id="UP000006559">
    <property type="component" value="Chromosome"/>
</dbReference>
<dbReference type="GO" id="GO:0005737">
    <property type="term" value="C:cytoplasm"/>
    <property type="evidence" value="ECO:0007669"/>
    <property type="project" value="UniProtKB-SubCell"/>
</dbReference>
<dbReference type="GO" id="GO:0005524">
    <property type="term" value="F:ATP binding"/>
    <property type="evidence" value="ECO:0007669"/>
    <property type="project" value="UniProtKB-UniRule"/>
</dbReference>
<dbReference type="GO" id="GO:0004326">
    <property type="term" value="F:tetrahydrofolylpolyglutamate synthase activity"/>
    <property type="evidence" value="ECO:0007669"/>
    <property type="project" value="InterPro"/>
</dbReference>
<dbReference type="GO" id="GO:0008764">
    <property type="term" value="F:UDP-N-acetylmuramoylalanine-D-glutamate ligase activity"/>
    <property type="evidence" value="ECO:0007669"/>
    <property type="project" value="UniProtKB-UniRule"/>
</dbReference>
<dbReference type="GO" id="GO:0051301">
    <property type="term" value="P:cell division"/>
    <property type="evidence" value="ECO:0007669"/>
    <property type="project" value="UniProtKB-KW"/>
</dbReference>
<dbReference type="GO" id="GO:0071555">
    <property type="term" value="P:cell wall organization"/>
    <property type="evidence" value="ECO:0007669"/>
    <property type="project" value="UniProtKB-KW"/>
</dbReference>
<dbReference type="GO" id="GO:0009252">
    <property type="term" value="P:peptidoglycan biosynthetic process"/>
    <property type="evidence" value="ECO:0007669"/>
    <property type="project" value="UniProtKB-UniRule"/>
</dbReference>
<dbReference type="GO" id="GO:0008360">
    <property type="term" value="P:regulation of cell shape"/>
    <property type="evidence" value="ECO:0007669"/>
    <property type="project" value="UniProtKB-KW"/>
</dbReference>
<dbReference type="Gene3D" id="3.90.190.20">
    <property type="entry name" value="Mur ligase, C-terminal domain"/>
    <property type="match status" value="1"/>
</dbReference>
<dbReference type="Gene3D" id="3.40.1190.10">
    <property type="entry name" value="Mur-like, catalytic domain"/>
    <property type="match status" value="1"/>
</dbReference>
<dbReference type="Gene3D" id="3.40.50.720">
    <property type="entry name" value="NAD(P)-binding Rossmann-like Domain"/>
    <property type="match status" value="1"/>
</dbReference>
<dbReference type="HAMAP" id="MF_00639">
    <property type="entry name" value="MurD"/>
    <property type="match status" value="1"/>
</dbReference>
<dbReference type="InterPro" id="IPR007698">
    <property type="entry name" value="AlaDH/PNT_NAD(H)-bd"/>
</dbReference>
<dbReference type="InterPro" id="IPR018109">
    <property type="entry name" value="Folylpolyglutamate_synth_CS"/>
</dbReference>
<dbReference type="InterPro" id="IPR036565">
    <property type="entry name" value="Mur-like_cat_sf"/>
</dbReference>
<dbReference type="InterPro" id="IPR004101">
    <property type="entry name" value="Mur_ligase_C"/>
</dbReference>
<dbReference type="InterPro" id="IPR036615">
    <property type="entry name" value="Mur_ligase_C_dom_sf"/>
</dbReference>
<dbReference type="InterPro" id="IPR013221">
    <property type="entry name" value="Mur_ligase_cen"/>
</dbReference>
<dbReference type="InterPro" id="IPR005762">
    <property type="entry name" value="MurD"/>
</dbReference>
<dbReference type="NCBIfam" id="TIGR01087">
    <property type="entry name" value="murD"/>
    <property type="match status" value="1"/>
</dbReference>
<dbReference type="PANTHER" id="PTHR43692">
    <property type="entry name" value="UDP-N-ACETYLMURAMOYLALANINE--D-GLUTAMATE LIGASE"/>
    <property type="match status" value="1"/>
</dbReference>
<dbReference type="PANTHER" id="PTHR43692:SF1">
    <property type="entry name" value="UDP-N-ACETYLMURAMOYLALANINE--D-GLUTAMATE LIGASE"/>
    <property type="match status" value="1"/>
</dbReference>
<dbReference type="Pfam" id="PF01262">
    <property type="entry name" value="AlaDh_PNT_C"/>
    <property type="match status" value="1"/>
</dbReference>
<dbReference type="Pfam" id="PF02875">
    <property type="entry name" value="Mur_ligase_C"/>
    <property type="match status" value="1"/>
</dbReference>
<dbReference type="Pfam" id="PF08245">
    <property type="entry name" value="Mur_ligase_M"/>
    <property type="match status" value="1"/>
</dbReference>
<dbReference type="Pfam" id="PF21799">
    <property type="entry name" value="MurD-like_N"/>
    <property type="match status" value="1"/>
</dbReference>
<dbReference type="SUPFAM" id="SSF51984">
    <property type="entry name" value="MurCD N-terminal domain"/>
    <property type="match status" value="1"/>
</dbReference>
<dbReference type="SUPFAM" id="SSF53623">
    <property type="entry name" value="MurD-like peptide ligases, catalytic domain"/>
    <property type="match status" value="1"/>
</dbReference>
<dbReference type="SUPFAM" id="SSF53244">
    <property type="entry name" value="MurD-like peptide ligases, peptide-binding domain"/>
    <property type="match status" value="1"/>
</dbReference>
<accession>Q1WT99</accession>
<feature type="chain" id="PRO_0000257199" description="UDP-N-acetylmuramoylalanine--D-glutamate ligase">
    <location>
        <begin position="1"/>
        <end position="458"/>
    </location>
</feature>
<feature type="binding site" evidence="1">
    <location>
        <begin position="118"/>
        <end position="124"/>
    </location>
    <ligand>
        <name>ATP</name>
        <dbReference type="ChEBI" id="CHEBI:30616"/>
    </ligand>
</feature>
<reference key="1">
    <citation type="journal article" date="2006" name="Proc. Natl. Acad. Sci. U.S.A.">
        <title>Multireplicon genome architecture of Lactobacillus salivarius.</title>
        <authorList>
            <person name="Claesson M.J."/>
            <person name="Li Y."/>
            <person name="Leahy S."/>
            <person name="Canchaya C."/>
            <person name="van Pijkeren J.P."/>
            <person name="Cerdeno-Tarraga A.M."/>
            <person name="Parkhill J."/>
            <person name="Flynn S."/>
            <person name="O'Sullivan G.C."/>
            <person name="Collins J.K."/>
            <person name="Higgins D."/>
            <person name="Shanahan F."/>
            <person name="Fitzgerald G.F."/>
            <person name="van Sinderen D."/>
            <person name="O'Toole P.W."/>
        </authorList>
    </citation>
    <scope>NUCLEOTIDE SEQUENCE [LARGE SCALE GENOMIC DNA]</scope>
    <source>
        <strain>UCC118</strain>
    </source>
</reference>